<evidence type="ECO:0000250" key="1">
    <source>
        <dbReference type="UniProtKB" id="P00396"/>
    </source>
</evidence>
<evidence type="ECO:0000250" key="2">
    <source>
        <dbReference type="UniProtKB" id="P00399"/>
    </source>
</evidence>
<evidence type="ECO:0000250" key="3">
    <source>
        <dbReference type="UniProtKB" id="P00401"/>
    </source>
</evidence>
<evidence type="ECO:0000250" key="4">
    <source>
        <dbReference type="UniProtKB" id="P98002"/>
    </source>
</evidence>
<evidence type="ECO:0000255" key="5"/>
<evidence type="ECO:0000305" key="6"/>
<evidence type="ECO:0000312" key="7">
    <source>
        <dbReference type="EMBL" id="AAK56378.2"/>
    </source>
</evidence>
<evidence type="ECO:0000312" key="8">
    <source>
        <dbReference type="EMBL" id="AAL25639.1"/>
    </source>
</evidence>
<evidence type="ECO:0000312" key="9">
    <source>
        <dbReference type="EMBL" id="AAL25640.1"/>
    </source>
</evidence>
<evidence type="ECO:0000312" key="10">
    <source>
        <dbReference type="EMBL" id="ABY51624.1"/>
    </source>
</evidence>
<dbReference type="EC" id="7.1.1.9"/>
<dbReference type="EMBL" id="EU352212">
    <property type="protein sequence ID" value="ABY51624.1"/>
    <property type="status" value="ALT_SEQ"/>
    <property type="molecule type" value="Genomic_DNA"/>
</dbReference>
<dbReference type="EMBL" id="AF380835">
    <property type="protein sequence ID" value="AAK56378.2"/>
    <property type="molecule type" value="Genomic_DNA"/>
</dbReference>
<dbReference type="EMBL" id="AF390098">
    <property type="protein sequence ID" value="AAK73349.2"/>
    <property type="molecule type" value="mRNA"/>
</dbReference>
<dbReference type="EMBL" id="AY056596">
    <property type="protein sequence ID" value="AAL25639.1"/>
    <property type="molecule type" value="Genomic_DNA"/>
</dbReference>
<dbReference type="EMBL" id="AY056597">
    <property type="protein sequence ID" value="AAL25640.1"/>
    <property type="molecule type" value="Genomic_DNA"/>
</dbReference>
<dbReference type="RefSeq" id="YP_001649163.1">
    <property type="nucleotide sequence ID" value="NC_010241.1"/>
</dbReference>
<dbReference type="SMR" id="B0FWC7"/>
<dbReference type="FunCoup" id="B0FWC7">
    <property type="interactions" value="128"/>
</dbReference>
<dbReference type="STRING" id="7159.B0FWC7"/>
<dbReference type="PaxDb" id="7159-AAEL018662-PA"/>
<dbReference type="VEuPathDB" id="VectorBase:AAEL018662"/>
<dbReference type="eggNOG" id="KOG4769">
    <property type="taxonomic scope" value="Eukaryota"/>
</dbReference>
<dbReference type="HOGENOM" id="CLU_011899_7_3_1"/>
<dbReference type="InParanoid" id="B0FWC7"/>
<dbReference type="UniPathway" id="UPA00705"/>
<dbReference type="Proteomes" id="UP000008820">
    <property type="component" value="Mitochondrion MT"/>
</dbReference>
<dbReference type="Proteomes" id="UP000008820">
    <property type="component" value="Unassembled WGS sequence"/>
</dbReference>
<dbReference type="Proteomes" id="UP000682892">
    <property type="component" value="Mitochondrion MT"/>
</dbReference>
<dbReference type="GO" id="GO:0005743">
    <property type="term" value="C:mitochondrial inner membrane"/>
    <property type="evidence" value="ECO:0007669"/>
    <property type="project" value="UniProtKB-SubCell"/>
</dbReference>
<dbReference type="GO" id="GO:0045277">
    <property type="term" value="C:respiratory chain complex IV"/>
    <property type="evidence" value="ECO:0007669"/>
    <property type="project" value="InterPro"/>
</dbReference>
<dbReference type="GO" id="GO:0004129">
    <property type="term" value="F:cytochrome-c oxidase activity"/>
    <property type="evidence" value="ECO:0007669"/>
    <property type="project" value="UniProtKB-EC"/>
</dbReference>
<dbReference type="GO" id="GO:0020037">
    <property type="term" value="F:heme binding"/>
    <property type="evidence" value="ECO:0007669"/>
    <property type="project" value="InterPro"/>
</dbReference>
<dbReference type="GO" id="GO:0046872">
    <property type="term" value="F:metal ion binding"/>
    <property type="evidence" value="ECO:0007669"/>
    <property type="project" value="UniProtKB-KW"/>
</dbReference>
<dbReference type="GO" id="GO:0015990">
    <property type="term" value="P:electron transport coupled proton transport"/>
    <property type="evidence" value="ECO:0007669"/>
    <property type="project" value="TreeGrafter"/>
</dbReference>
<dbReference type="GO" id="GO:0006123">
    <property type="term" value="P:mitochondrial electron transport, cytochrome c to oxygen"/>
    <property type="evidence" value="ECO:0007669"/>
    <property type="project" value="TreeGrafter"/>
</dbReference>
<dbReference type="CDD" id="cd01663">
    <property type="entry name" value="Cyt_c_Oxidase_I"/>
    <property type="match status" value="1"/>
</dbReference>
<dbReference type="FunFam" id="1.20.210.10:FF:000001">
    <property type="entry name" value="Cytochrome c oxidase subunit 1"/>
    <property type="match status" value="1"/>
</dbReference>
<dbReference type="Gene3D" id="1.20.210.10">
    <property type="entry name" value="Cytochrome c oxidase-like, subunit I domain"/>
    <property type="match status" value="1"/>
</dbReference>
<dbReference type="InterPro" id="IPR023616">
    <property type="entry name" value="Cyt_c_oxase-like_su1_dom"/>
</dbReference>
<dbReference type="InterPro" id="IPR036927">
    <property type="entry name" value="Cyt_c_oxase-like_su1_sf"/>
</dbReference>
<dbReference type="InterPro" id="IPR000883">
    <property type="entry name" value="Cyt_C_Oxase_1"/>
</dbReference>
<dbReference type="InterPro" id="IPR023615">
    <property type="entry name" value="Cyt_c_Oxase_su1_BS"/>
</dbReference>
<dbReference type="InterPro" id="IPR033944">
    <property type="entry name" value="Cyt_c_oxase_su1_dom"/>
</dbReference>
<dbReference type="PANTHER" id="PTHR10422">
    <property type="entry name" value="CYTOCHROME C OXIDASE SUBUNIT 1"/>
    <property type="match status" value="1"/>
</dbReference>
<dbReference type="PANTHER" id="PTHR10422:SF18">
    <property type="entry name" value="CYTOCHROME C OXIDASE SUBUNIT 1"/>
    <property type="match status" value="1"/>
</dbReference>
<dbReference type="Pfam" id="PF00115">
    <property type="entry name" value="COX1"/>
    <property type="match status" value="1"/>
</dbReference>
<dbReference type="PRINTS" id="PR01165">
    <property type="entry name" value="CYCOXIDASEI"/>
</dbReference>
<dbReference type="SUPFAM" id="SSF81442">
    <property type="entry name" value="Cytochrome c oxidase subunit I-like"/>
    <property type="match status" value="1"/>
</dbReference>
<dbReference type="PROSITE" id="PS50855">
    <property type="entry name" value="COX1"/>
    <property type="match status" value="1"/>
</dbReference>
<dbReference type="PROSITE" id="PS00077">
    <property type="entry name" value="COX1_CUB"/>
    <property type="match status" value="1"/>
</dbReference>
<proteinExistence type="evidence at transcript level"/>
<protein>
    <recommendedName>
        <fullName>Cytochrome c oxidase subunit 1</fullName>
        <ecNumber>7.1.1.9</ecNumber>
    </recommendedName>
    <alternativeName>
        <fullName>Cytochrome c oxidase polypeptide I</fullName>
    </alternativeName>
</protein>
<reference evidence="10" key="1">
    <citation type="submission" date="2007-12" db="EMBL/GenBank/DDBJ databases">
        <title>The mitochondrial genome of the Yellow fever mosquito - Aedes aegypti.</title>
        <authorList>
            <person name="Lobo N.F."/>
            <person name="Lovin D."/>
            <person name="DeBruyn B."/>
            <person name="Puiu D."/>
            <person name="Shumway M."/>
            <person name="Haas B."/>
            <person name="Nene V."/>
            <person name="Severson D.W."/>
        </authorList>
    </citation>
    <scope>NUCLEOTIDE SEQUENCE [LARGE SCALE GENOMIC DNA]</scope>
    <source>
        <strain evidence="10">LVPib12</strain>
    </source>
</reference>
<reference evidence="6 7" key="2">
    <citation type="journal article" date="2002" name="DNA Seq.">
        <title>Complete mitochondrial DNA sequence and amino acid analysis of the cytochrome C oxidase subunit I (COI) from Aedes aegypti.</title>
        <authorList>
            <person name="Morlais I."/>
            <person name="Severson D.W."/>
        </authorList>
    </citation>
    <scope>NUCLEOTIDE SEQUENCE [GENOMIC DNA / MRNA] OF 2-513</scope>
    <source>
        <strain evidence="9">Formosus</strain>
        <strain evidence="8">Liverpool</strain>
        <strain>Moyo-R</strain>
        <strain>Red eye</strain>
        <tissue evidence="7">Midgut</tissue>
    </source>
</reference>
<gene>
    <name evidence="2" type="primary">mt:CoI</name>
    <name evidence="7" type="synonym">COI</name>
    <name evidence="10" type="synonym">COX1</name>
</gene>
<name>COX1_AEDAE</name>
<geneLocation type="mitochondrion" evidence="10"/>
<sequence>MSRQWLFSTNHKDIGTLYFIFGVWSGMVGTSLSILIRAELSHPGMFIGNDQIYNVIVTAHAFIMIFFMVMPIMIGGFGNWLVPLMLGAPDMAFPRMNNMSFWMLPPSLTLLLSSSMVENGAGTGWTVYPPLSSGTAHAGASVDLAIFSLHLAGISSILGAVNFITTVINMRSSGITLDRLPLFVWSVVITAILLLLSLPVLAGAITMLLTDRNLNTSFFDPIGGGDPILYQHLFWFFGHPEVYILILPGFGMISHIITQESGKKETFGTLGMIYAMLTIGLLGFIVWAHHMFTVGMDVDTRAYFTSATMIIAVPTGIKIFSWLATLHGTQLTYSPALLWSLGFVFLFTVGGLTGVVLANSSIDIVLHDTYYVVAHFHYVLSMGAVFAIMAGFIHWYPLLTGMVMNPSWLKAQFSMMFIGVNLTFFPQHFLGLAGMPRRYSDFPDSYLTWNIISSLGSTISLFAVIFFLFIIWESMITQRTPSFPMQLSSSIEWYHTLPPAEHTYSELPLLSSNF</sequence>
<organism>
    <name type="scientific">Aedes aegypti</name>
    <name type="common">Yellowfever mosquito</name>
    <name type="synonym">Culex aegypti</name>
    <dbReference type="NCBI Taxonomy" id="7159"/>
    <lineage>
        <taxon>Eukaryota</taxon>
        <taxon>Metazoa</taxon>
        <taxon>Ecdysozoa</taxon>
        <taxon>Arthropoda</taxon>
        <taxon>Hexapoda</taxon>
        <taxon>Insecta</taxon>
        <taxon>Pterygota</taxon>
        <taxon>Neoptera</taxon>
        <taxon>Endopterygota</taxon>
        <taxon>Diptera</taxon>
        <taxon>Nematocera</taxon>
        <taxon>Culicoidea</taxon>
        <taxon>Culicidae</taxon>
        <taxon>Culicinae</taxon>
        <taxon>Aedini</taxon>
        <taxon>Aedes</taxon>
        <taxon>Stegomyia</taxon>
    </lineage>
</organism>
<feature type="chain" id="PRO_0000347262" description="Cytochrome c oxidase subunit 1">
    <location>
        <begin position="1"/>
        <end position="514"/>
    </location>
</feature>
<feature type="transmembrane region" description="Helical" evidence="5">
    <location>
        <begin position="16"/>
        <end position="36"/>
    </location>
</feature>
<feature type="transmembrane region" description="Helical" evidence="5">
    <location>
        <begin position="55"/>
        <end position="75"/>
    </location>
</feature>
<feature type="transmembrane region" description="Helical" evidence="5">
    <location>
        <begin position="101"/>
        <end position="117"/>
    </location>
</feature>
<feature type="transmembrane region" description="Helical" evidence="5">
    <location>
        <begin position="144"/>
        <end position="164"/>
    </location>
</feature>
<feature type="transmembrane region" description="Helical" evidence="5">
    <location>
        <begin position="182"/>
        <end position="202"/>
    </location>
</feature>
<feature type="transmembrane region" description="Helical" evidence="5">
    <location>
        <begin position="233"/>
        <end position="253"/>
    </location>
</feature>
<feature type="transmembrane region" description="Helical" evidence="5">
    <location>
        <begin position="267"/>
        <end position="287"/>
    </location>
</feature>
<feature type="transmembrane region" description="Helical" evidence="5">
    <location>
        <begin position="304"/>
        <end position="324"/>
    </location>
</feature>
<feature type="transmembrane region" description="Helical" evidence="5">
    <location>
        <begin position="337"/>
        <end position="357"/>
    </location>
</feature>
<feature type="transmembrane region" description="Helical" evidence="5">
    <location>
        <begin position="379"/>
        <end position="399"/>
    </location>
</feature>
<feature type="transmembrane region" description="Helical" evidence="5">
    <location>
        <begin position="415"/>
        <end position="435"/>
    </location>
</feature>
<feature type="transmembrane region" description="Helical" evidence="5">
    <location>
        <begin position="451"/>
        <end position="471"/>
    </location>
</feature>
<feature type="binding site" evidence="3">
    <location>
        <position position="39"/>
    </location>
    <ligand>
        <name>Ca(2+)</name>
        <dbReference type="ChEBI" id="CHEBI:29108"/>
    </ligand>
</feature>
<feature type="binding site" evidence="3">
    <location>
        <position position="44"/>
    </location>
    <ligand>
        <name>Ca(2+)</name>
        <dbReference type="ChEBI" id="CHEBI:29108"/>
    </ligand>
</feature>
<feature type="binding site" description="axial binding residue" evidence="3">
    <location>
        <position position="60"/>
    </location>
    <ligand>
        <name>Fe(II)-heme a</name>
        <dbReference type="ChEBI" id="CHEBI:61715"/>
        <note>low-spin</note>
    </ligand>
    <ligandPart>
        <name>Fe</name>
        <dbReference type="ChEBI" id="CHEBI:18248"/>
    </ligandPart>
</feature>
<feature type="binding site" evidence="3">
    <location>
        <position position="239"/>
    </location>
    <ligand>
        <name>Cu cation</name>
        <dbReference type="ChEBI" id="CHEBI:23378"/>
        <label>B</label>
    </ligand>
</feature>
<feature type="binding site" evidence="1">
    <location>
        <position position="243"/>
    </location>
    <ligand>
        <name>O2</name>
        <dbReference type="ChEBI" id="CHEBI:15379"/>
    </ligand>
</feature>
<feature type="binding site" evidence="3">
    <location>
        <position position="289"/>
    </location>
    <ligand>
        <name>Cu cation</name>
        <dbReference type="ChEBI" id="CHEBI:23378"/>
        <label>B</label>
    </ligand>
</feature>
<feature type="binding site" evidence="3">
    <location>
        <position position="290"/>
    </location>
    <ligand>
        <name>Cu cation</name>
        <dbReference type="ChEBI" id="CHEBI:23378"/>
        <label>B</label>
    </ligand>
</feature>
<feature type="binding site" evidence="3">
    <location>
        <position position="367"/>
    </location>
    <ligand>
        <name>Mg(2+)</name>
        <dbReference type="ChEBI" id="CHEBI:18420"/>
        <note>ligand shared with subunit 2</note>
    </ligand>
</feature>
<feature type="binding site" evidence="3">
    <location>
        <position position="368"/>
    </location>
    <ligand>
        <name>Mg(2+)</name>
        <dbReference type="ChEBI" id="CHEBI:18420"/>
        <note>ligand shared with subunit 2</note>
    </ligand>
</feature>
<feature type="binding site" description="axial binding residue" evidence="3">
    <location>
        <position position="375"/>
    </location>
    <ligand>
        <name>heme a3</name>
        <dbReference type="ChEBI" id="CHEBI:83282"/>
        <note>high-spin</note>
    </ligand>
    <ligandPart>
        <name>Fe</name>
        <dbReference type="ChEBI" id="CHEBI:18248"/>
    </ligandPart>
</feature>
<feature type="binding site" description="axial binding residue" evidence="3">
    <location>
        <position position="377"/>
    </location>
    <ligand>
        <name>Fe(II)-heme a</name>
        <dbReference type="ChEBI" id="CHEBI:61715"/>
        <note>low-spin</note>
    </ligand>
    <ligandPart>
        <name>Fe</name>
        <dbReference type="ChEBI" id="CHEBI:18248"/>
    </ligandPart>
</feature>
<feature type="cross-link" description="1'-histidyl-3'-tyrosine (His-Tyr)" evidence="4">
    <location>
        <begin position="239"/>
        <end position="243"/>
    </location>
</feature>
<feature type="sequence conflict" description="In Ref. 1; ABY51624." evidence="6" ref="1">
    <original>R</original>
    <variation>W</variation>
    <location>
        <position position="171"/>
    </location>
</feature>
<accession>B0FWC7</accession>
<accession>Q94PR3</accession>
<comment type="function">
    <text evidence="3">Component of the cytochrome c oxidase, the last enzyme in the mitochondrial electron transport chain which drives oxidative phosphorylation. The respiratory chain contains 3 multisubunit complexes succinate dehydrogenase (complex II, CII), ubiquinol-cytochrome c oxidoreductase (cytochrome b-c1 complex, complex III, CIII) and cytochrome c oxidase (complex IV, CIV), that cooperate to transfer electrons derived from NADH and succinate to molecular oxygen, creating an electrochemical gradient over the inner membrane that drives transmembrane transport and the ATP synthase. Cytochrome c oxidase is the component of the respiratory chain that catalyzes the reduction of oxygen to water. Electrons originating from reduced cytochrome c in the intermembrane space (IMS) are transferred via the dinuclear copper A center (CU(A)) of subunit 2 and heme A of subunit 1 to the active site in subunit 1, a binuclear center (BNC) formed by heme A3 and copper B (CU(B)). The BNC reduces molecular oxygen to 2 water molecules using 4 electrons from cytochrome c in the IMS and 4 protons from the mitochondrial matrix.</text>
</comment>
<comment type="catalytic activity">
    <reaction evidence="3">
        <text>4 Fe(II)-[cytochrome c] + O2 + 8 H(+)(in) = 4 Fe(III)-[cytochrome c] + 2 H2O + 4 H(+)(out)</text>
        <dbReference type="Rhea" id="RHEA:11436"/>
        <dbReference type="Rhea" id="RHEA-COMP:10350"/>
        <dbReference type="Rhea" id="RHEA-COMP:14399"/>
        <dbReference type="ChEBI" id="CHEBI:15377"/>
        <dbReference type="ChEBI" id="CHEBI:15378"/>
        <dbReference type="ChEBI" id="CHEBI:15379"/>
        <dbReference type="ChEBI" id="CHEBI:29033"/>
        <dbReference type="ChEBI" id="CHEBI:29034"/>
        <dbReference type="EC" id="7.1.1.9"/>
    </reaction>
    <physiologicalReaction direction="left-to-right" evidence="3">
        <dbReference type="Rhea" id="RHEA:11437"/>
    </physiologicalReaction>
</comment>
<comment type="cofactor">
    <cofactor evidence="3">
        <name>heme</name>
        <dbReference type="ChEBI" id="CHEBI:30413"/>
    </cofactor>
    <text evidence="3">Binds 2 heme A groups non-covalently per subunit.</text>
</comment>
<comment type="cofactor">
    <cofactor evidence="3">
        <name>Cu cation</name>
        <dbReference type="ChEBI" id="CHEBI:23378"/>
    </cofactor>
    <text evidence="3">Binds a copper B center.</text>
</comment>
<comment type="pathway">
    <text evidence="3">Energy metabolism; oxidative phosphorylation.</text>
</comment>
<comment type="subunit">
    <text evidence="3">Component of the cytochrome c oxidase (complex IV, CIV), a multisubunit enzyme composed of a catalytic core of 3 subunits and several supernumerary subunits. The complex exists as a monomer or a dimer and forms supercomplexes (SCs) in the inner mitochondrial membrane with ubiquinol-cytochrome c oxidoreductase (cytochrome b-c1 complex, complex III, CIII).</text>
</comment>
<comment type="subcellular location">
    <subcellularLocation>
        <location evidence="3">Mitochondrion inner membrane</location>
        <topology evidence="3">Multi-pass membrane protein</topology>
    </subcellularLocation>
</comment>
<comment type="similarity">
    <text evidence="5">Belongs to the heme-copper respiratory oxidase family.</text>
</comment>
<comment type="sequence caution" evidence="6">
    <conflict type="erroneous gene model prediction">
        <sequence resource="EMBL-CDS" id="ABY51624"/>
    </conflict>
</comment>
<keyword id="KW-0106">Calcium</keyword>
<keyword id="KW-0186">Copper</keyword>
<keyword id="KW-0249">Electron transport</keyword>
<keyword id="KW-0349">Heme</keyword>
<keyword id="KW-0408">Iron</keyword>
<keyword id="KW-0460">Magnesium</keyword>
<keyword id="KW-0472">Membrane</keyword>
<keyword id="KW-0479">Metal-binding</keyword>
<keyword id="KW-0496">Mitochondrion</keyword>
<keyword id="KW-0999">Mitochondrion inner membrane</keyword>
<keyword id="KW-1185">Reference proteome</keyword>
<keyword id="KW-0679">Respiratory chain</keyword>
<keyword id="KW-1278">Translocase</keyword>
<keyword id="KW-0812">Transmembrane</keyword>
<keyword id="KW-1133">Transmembrane helix</keyword>
<keyword id="KW-0813">Transport</keyword>